<proteinExistence type="inferred from homology"/>
<evidence type="ECO:0000250" key="1"/>
<evidence type="ECO:0000256" key="2">
    <source>
        <dbReference type="SAM" id="MobiDB-lite"/>
    </source>
</evidence>
<sequence length="956" mass="106589">MWYPPAAVVPFFESHSVTYEDRSAIAKWHFLPFDQRAVNEMTVLLNFLHISQGFHNETLYTDVRRRCMLMRSLFELVFANNYLELTNPKLLGWFLYLTAEDRTLIQNEGGLLSFLKKHPELGVTRQYVYVKAKPKGNYVPPPTTMASNDSRYPTFYGSSGCQNCGTSCPFGTKKCTRCGVHIVISQDKISVSENEKQLQLLPNSLKEELNVFQTSQSNVEMQNIHLGCTQSTLNTRSKQRSPEAHPHFYSKGMCSHAQCLSQLWQEVESREDAKHFKDTSAQASFCLDMELDVQSQVQRNDNTQNNQNQSYNPTEENDHNVDQETMPEYYSFSSISLDHTAWSNGSQSAETGFNDSITATKGSTELSDELSEAANSTAANSTDCFSCVSNSFELAEESGDCLDSRYEQQINKSNVGSSPKSKSSASVYVDQMIDACGDFRAFFTSTCATKTDQTFQVKNVATDTDLPAVSHEKDTQTMRMTTSDKNTITEVYMSDLDVLTEEFIKLKETEKGLKQMKSMNARRLCGCDCAQRVRKAELNLLALQFVMCQQHCWRRYFTSPLGESAYQGTEALPDSIAETLKTLQKDYHEMRQQILAGTPLDDLAPLSVNSEKISTGTNYSPSSVLAAHLDCAGSTIASDHKVDEEHTAMKVPPSEVCQDIETAPDEAKNECSKRDKALFILPKQTRISTEPKTVGANKDLNGSEAWFDAEEELGFPNQDGNMEKPNKMRETMRHKMETKGTDEDVSKQSSLLCITCLPGNITEHEVLLWFEKYNPTNVCISAFSNNTRAAIVYLKSYIDAKAAVEDLNGRSLQGHAVQVVHLSGTVSADLKPSDLSHSASESHKEDTAGDELRTKNLTYGSSHGGPRCSLERLTNVCNSPTASGTCVPQHYATMGSFDTIMARLSERHPNVARQRIVDALLELRAKHQGFLSGLPLRSIVDMTSELLTQTSSSARV</sequence>
<comment type="function">
    <text evidence="1">Component of intercellular bridges during meiosis. Intercellular bridges are evolutionarily conserved structures that connect differentiating germ cells. Not required for fertility (By similarity).</text>
</comment>
<comment type="subcellular location">
    <subcellularLocation>
        <location evidence="1">Cytoplasm</location>
    </subcellularLocation>
    <text evidence="1">Detected in the intercellular bridges.</text>
</comment>
<name>RBM44_DANRE</name>
<accession>B0S6S9</accession>
<dbReference type="EMBL" id="CR391951">
    <property type="protein sequence ID" value="CAQ13988.1"/>
    <property type="molecule type" value="Genomic_DNA"/>
</dbReference>
<dbReference type="EMBL" id="BX548053">
    <property type="protein sequence ID" value="CAQ13988.1"/>
    <property type="status" value="JOINED"/>
    <property type="molecule type" value="Genomic_DNA"/>
</dbReference>
<dbReference type="EMBL" id="BX548053">
    <property type="protein sequence ID" value="CAQ14813.1"/>
    <property type="molecule type" value="Genomic_DNA"/>
</dbReference>
<dbReference type="EMBL" id="CR391951">
    <property type="protein sequence ID" value="CAQ14813.1"/>
    <property type="status" value="JOINED"/>
    <property type="molecule type" value="Genomic_DNA"/>
</dbReference>
<dbReference type="RefSeq" id="NP_001122014.1">
    <property type="nucleotide sequence ID" value="NM_001128542.1"/>
</dbReference>
<dbReference type="RefSeq" id="XP_068079547.1">
    <property type="nucleotide sequence ID" value="XM_068223446.1"/>
</dbReference>
<dbReference type="SMR" id="B0S6S9"/>
<dbReference type="FunCoup" id="B0S6S9">
    <property type="interactions" value="205"/>
</dbReference>
<dbReference type="STRING" id="7955.ENSDARP00000092541"/>
<dbReference type="PaxDb" id="7955-ENSDARP00000092541"/>
<dbReference type="PeptideAtlas" id="B0S6S9"/>
<dbReference type="Ensembl" id="ENSDART00000101765">
    <property type="protein sequence ID" value="ENSDARP00000092541"/>
    <property type="gene ID" value="ENSDARG00000069758"/>
</dbReference>
<dbReference type="GeneID" id="567482"/>
<dbReference type="KEGG" id="dre:567482"/>
<dbReference type="AGR" id="ZFIN:ZDB-GENE-030131-5562"/>
<dbReference type="CTD" id="375316"/>
<dbReference type="ZFIN" id="ZDB-GENE-030131-5562">
    <property type="gene designation" value="rbm44"/>
</dbReference>
<dbReference type="eggNOG" id="ENOG502S2NU">
    <property type="taxonomic scope" value="Eukaryota"/>
</dbReference>
<dbReference type="HOGENOM" id="CLU_308577_0_0_1"/>
<dbReference type="InParanoid" id="B0S6S9"/>
<dbReference type="OMA" id="TEVRMSD"/>
<dbReference type="OrthoDB" id="9941526at2759"/>
<dbReference type="PhylomeDB" id="B0S6S9"/>
<dbReference type="PRO" id="PR:B0S6S9"/>
<dbReference type="Proteomes" id="UP000000437">
    <property type="component" value="Alternate scaffold 9"/>
</dbReference>
<dbReference type="Proteomes" id="UP000000437">
    <property type="component" value="Chromosome 9"/>
</dbReference>
<dbReference type="Bgee" id="ENSDARG00000069758">
    <property type="expression patterns" value="Expressed in testis and 14 other cell types or tissues"/>
</dbReference>
<dbReference type="ExpressionAtlas" id="B0S6S9">
    <property type="expression patterns" value="baseline"/>
</dbReference>
<dbReference type="GO" id="GO:0005737">
    <property type="term" value="C:cytoplasm"/>
    <property type="evidence" value="ECO:0000250"/>
    <property type="project" value="UniProtKB"/>
</dbReference>
<dbReference type="GO" id="GO:0045171">
    <property type="term" value="C:intercellular bridge"/>
    <property type="evidence" value="ECO:0000250"/>
    <property type="project" value="UniProtKB"/>
</dbReference>
<dbReference type="GO" id="GO:0042803">
    <property type="term" value="F:protein homodimerization activity"/>
    <property type="evidence" value="ECO:0000250"/>
    <property type="project" value="UniProtKB"/>
</dbReference>
<dbReference type="GO" id="GO:0003723">
    <property type="term" value="F:RNA binding"/>
    <property type="evidence" value="ECO:0007669"/>
    <property type="project" value="UniProtKB-KW"/>
</dbReference>
<dbReference type="Gene3D" id="3.30.70.330">
    <property type="match status" value="1"/>
</dbReference>
<dbReference type="InterPro" id="IPR012677">
    <property type="entry name" value="Nucleotide-bd_a/b_plait_sf"/>
</dbReference>
<dbReference type="InterPro" id="IPR035979">
    <property type="entry name" value="RBD_domain_sf"/>
</dbReference>
<dbReference type="InterPro" id="IPR000504">
    <property type="entry name" value="RRM_dom"/>
</dbReference>
<dbReference type="PANTHER" id="PTHR17550">
    <property type="entry name" value="E3 UBIQUITIN-PROTEIN LIGASE TTC3"/>
    <property type="match status" value="1"/>
</dbReference>
<dbReference type="PANTHER" id="PTHR17550:SF7">
    <property type="entry name" value="RNA-BINDING PROTEIN 44"/>
    <property type="match status" value="1"/>
</dbReference>
<dbReference type="Pfam" id="PF00076">
    <property type="entry name" value="RRM_1"/>
    <property type="match status" value="1"/>
</dbReference>
<dbReference type="SMART" id="SM00360">
    <property type="entry name" value="RRM"/>
    <property type="match status" value="1"/>
</dbReference>
<dbReference type="SUPFAM" id="SSF54928">
    <property type="entry name" value="RNA-binding domain, RBD"/>
    <property type="match status" value="1"/>
</dbReference>
<protein>
    <recommendedName>
        <fullName>RNA-binding protein 44</fullName>
    </recommendedName>
    <alternativeName>
        <fullName>RNA-binding motif protein 44</fullName>
    </alternativeName>
</protein>
<reference key="1">
    <citation type="journal article" date="2013" name="Nature">
        <title>The zebrafish reference genome sequence and its relationship to the human genome.</title>
        <authorList>
            <person name="Howe K."/>
            <person name="Clark M.D."/>
            <person name="Torroja C.F."/>
            <person name="Torrance J."/>
            <person name="Berthelot C."/>
            <person name="Muffato M."/>
            <person name="Collins J.E."/>
            <person name="Humphray S."/>
            <person name="McLaren K."/>
            <person name="Matthews L."/>
            <person name="McLaren S."/>
            <person name="Sealy I."/>
            <person name="Caccamo M."/>
            <person name="Churcher C."/>
            <person name="Scott C."/>
            <person name="Barrett J.C."/>
            <person name="Koch R."/>
            <person name="Rauch G.J."/>
            <person name="White S."/>
            <person name="Chow W."/>
            <person name="Kilian B."/>
            <person name="Quintais L.T."/>
            <person name="Guerra-Assuncao J.A."/>
            <person name="Zhou Y."/>
            <person name="Gu Y."/>
            <person name="Yen J."/>
            <person name="Vogel J.H."/>
            <person name="Eyre T."/>
            <person name="Redmond S."/>
            <person name="Banerjee R."/>
            <person name="Chi J."/>
            <person name="Fu B."/>
            <person name="Langley E."/>
            <person name="Maguire S.F."/>
            <person name="Laird G.K."/>
            <person name="Lloyd D."/>
            <person name="Kenyon E."/>
            <person name="Donaldson S."/>
            <person name="Sehra H."/>
            <person name="Almeida-King J."/>
            <person name="Loveland J."/>
            <person name="Trevanion S."/>
            <person name="Jones M."/>
            <person name="Quail M."/>
            <person name="Willey D."/>
            <person name="Hunt A."/>
            <person name="Burton J."/>
            <person name="Sims S."/>
            <person name="McLay K."/>
            <person name="Plumb B."/>
            <person name="Davis J."/>
            <person name="Clee C."/>
            <person name="Oliver K."/>
            <person name="Clark R."/>
            <person name="Riddle C."/>
            <person name="Elliot D."/>
            <person name="Threadgold G."/>
            <person name="Harden G."/>
            <person name="Ware D."/>
            <person name="Begum S."/>
            <person name="Mortimore B."/>
            <person name="Kerry G."/>
            <person name="Heath P."/>
            <person name="Phillimore B."/>
            <person name="Tracey A."/>
            <person name="Corby N."/>
            <person name="Dunn M."/>
            <person name="Johnson C."/>
            <person name="Wood J."/>
            <person name="Clark S."/>
            <person name="Pelan S."/>
            <person name="Griffiths G."/>
            <person name="Smith M."/>
            <person name="Glithero R."/>
            <person name="Howden P."/>
            <person name="Barker N."/>
            <person name="Lloyd C."/>
            <person name="Stevens C."/>
            <person name="Harley J."/>
            <person name="Holt K."/>
            <person name="Panagiotidis G."/>
            <person name="Lovell J."/>
            <person name="Beasley H."/>
            <person name="Henderson C."/>
            <person name="Gordon D."/>
            <person name="Auger K."/>
            <person name="Wright D."/>
            <person name="Collins J."/>
            <person name="Raisen C."/>
            <person name="Dyer L."/>
            <person name="Leung K."/>
            <person name="Robertson L."/>
            <person name="Ambridge K."/>
            <person name="Leongamornlert D."/>
            <person name="McGuire S."/>
            <person name="Gilderthorp R."/>
            <person name="Griffiths C."/>
            <person name="Manthravadi D."/>
            <person name="Nichol S."/>
            <person name="Barker G."/>
            <person name="Whitehead S."/>
            <person name="Kay M."/>
            <person name="Brown J."/>
            <person name="Murnane C."/>
            <person name="Gray E."/>
            <person name="Humphries M."/>
            <person name="Sycamore N."/>
            <person name="Barker D."/>
            <person name="Saunders D."/>
            <person name="Wallis J."/>
            <person name="Babbage A."/>
            <person name="Hammond S."/>
            <person name="Mashreghi-Mohammadi M."/>
            <person name="Barr L."/>
            <person name="Martin S."/>
            <person name="Wray P."/>
            <person name="Ellington A."/>
            <person name="Matthews N."/>
            <person name="Ellwood M."/>
            <person name="Woodmansey R."/>
            <person name="Clark G."/>
            <person name="Cooper J."/>
            <person name="Tromans A."/>
            <person name="Grafham D."/>
            <person name="Skuce C."/>
            <person name="Pandian R."/>
            <person name="Andrews R."/>
            <person name="Harrison E."/>
            <person name="Kimberley A."/>
            <person name="Garnett J."/>
            <person name="Fosker N."/>
            <person name="Hall R."/>
            <person name="Garner P."/>
            <person name="Kelly D."/>
            <person name="Bird C."/>
            <person name="Palmer S."/>
            <person name="Gehring I."/>
            <person name="Berger A."/>
            <person name="Dooley C.M."/>
            <person name="Ersan-Urun Z."/>
            <person name="Eser C."/>
            <person name="Geiger H."/>
            <person name="Geisler M."/>
            <person name="Karotki L."/>
            <person name="Kirn A."/>
            <person name="Konantz J."/>
            <person name="Konantz M."/>
            <person name="Oberlander M."/>
            <person name="Rudolph-Geiger S."/>
            <person name="Teucke M."/>
            <person name="Lanz C."/>
            <person name="Raddatz G."/>
            <person name="Osoegawa K."/>
            <person name="Zhu B."/>
            <person name="Rapp A."/>
            <person name="Widaa S."/>
            <person name="Langford C."/>
            <person name="Yang F."/>
            <person name="Schuster S.C."/>
            <person name="Carter N.P."/>
            <person name="Harrow J."/>
            <person name="Ning Z."/>
            <person name="Herrero J."/>
            <person name="Searle S.M."/>
            <person name="Enright A."/>
            <person name="Geisler R."/>
            <person name="Plasterk R.H."/>
            <person name="Lee C."/>
            <person name="Westerfield M."/>
            <person name="de Jong P.J."/>
            <person name="Zon L.I."/>
            <person name="Postlethwait J.H."/>
            <person name="Nusslein-Volhard C."/>
            <person name="Hubbard T.J."/>
            <person name="Roest Crollius H."/>
            <person name="Rogers J."/>
            <person name="Stemple D.L."/>
        </authorList>
    </citation>
    <scope>NUCLEOTIDE SEQUENCE [LARGE SCALE GENOMIC DNA]</scope>
    <source>
        <strain>Tuebingen</strain>
    </source>
</reference>
<organism>
    <name type="scientific">Danio rerio</name>
    <name type="common">Zebrafish</name>
    <name type="synonym">Brachydanio rerio</name>
    <dbReference type="NCBI Taxonomy" id="7955"/>
    <lineage>
        <taxon>Eukaryota</taxon>
        <taxon>Metazoa</taxon>
        <taxon>Chordata</taxon>
        <taxon>Craniata</taxon>
        <taxon>Vertebrata</taxon>
        <taxon>Euteleostomi</taxon>
        <taxon>Actinopterygii</taxon>
        <taxon>Neopterygii</taxon>
        <taxon>Teleostei</taxon>
        <taxon>Ostariophysi</taxon>
        <taxon>Cypriniformes</taxon>
        <taxon>Danionidae</taxon>
        <taxon>Danioninae</taxon>
        <taxon>Danio</taxon>
    </lineage>
</organism>
<keyword id="KW-0963">Cytoplasm</keyword>
<keyword id="KW-1185">Reference proteome</keyword>
<keyword id="KW-0694">RNA-binding</keyword>
<feature type="chain" id="PRO_0000417525" description="RNA-binding protein 44">
    <location>
        <begin position="1"/>
        <end position="956"/>
    </location>
</feature>
<feature type="domain" description="RRM">
    <location>
        <begin position="750"/>
        <end position="824"/>
    </location>
</feature>
<feature type="region of interest" description="Disordered" evidence="2">
    <location>
        <begin position="301"/>
        <end position="321"/>
    </location>
</feature>
<feature type="region of interest" description="Disordered" evidence="2">
    <location>
        <begin position="831"/>
        <end position="855"/>
    </location>
</feature>
<feature type="compositionally biased region" description="Basic and acidic residues" evidence="2">
    <location>
        <begin position="840"/>
        <end position="854"/>
    </location>
</feature>
<gene>
    <name type="primary">rbm44</name>
    <name type="ORF">si:dkey-189g17.2</name>
</gene>